<name>ILVD_SALAI</name>
<organism>
    <name type="scientific">Salinispora arenicola (strain CNS-205)</name>
    <dbReference type="NCBI Taxonomy" id="391037"/>
    <lineage>
        <taxon>Bacteria</taxon>
        <taxon>Bacillati</taxon>
        <taxon>Actinomycetota</taxon>
        <taxon>Actinomycetes</taxon>
        <taxon>Micromonosporales</taxon>
        <taxon>Micromonosporaceae</taxon>
        <taxon>Salinispora</taxon>
    </lineage>
</organism>
<comment type="function">
    <text evidence="1">Functions in the biosynthesis of branched-chain amino acids. Catalyzes the dehydration of (2R,3R)-2,3-dihydroxy-3-methylpentanoate (2,3-dihydroxy-3-methylvalerate) into 2-oxo-3-methylpentanoate (2-oxo-3-methylvalerate) and of (2R)-2,3-dihydroxy-3-methylbutanoate (2,3-dihydroxyisovalerate) into 2-oxo-3-methylbutanoate (2-oxoisovalerate), the penultimate precursor to L-isoleucine and L-valine, respectively.</text>
</comment>
<comment type="catalytic activity">
    <reaction evidence="1">
        <text>(2R)-2,3-dihydroxy-3-methylbutanoate = 3-methyl-2-oxobutanoate + H2O</text>
        <dbReference type="Rhea" id="RHEA:24809"/>
        <dbReference type="ChEBI" id="CHEBI:11851"/>
        <dbReference type="ChEBI" id="CHEBI:15377"/>
        <dbReference type="ChEBI" id="CHEBI:49072"/>
        <dbReference type="EC" id="4.2.1.9"/>
    </reaction>
    <physiologicalReaction direction="left-to-right" evidence="1">
        <dbReference type="Rhea" id="RHEA:24810"/>
    </physiologicalReaction>
</comment>
<comment type="catalytic activity">
    <reaction evidence="1">
        <text>(2R,3R)-2,3-dihydroxy-3-methylpentanoate = (S)-3-methyl-2-oxopentanoate + H2O</text>
        <dbReference type="Rhea" id="RHEA:27694"/>
        <dbReference type="ChEBI" id="CHEBI:15377"/>
        <dbReference type="ChEBI" id="CHEBI:35146"/>
        <dbReference type="ChEBI" id="CHEBI:49258"/>
        <dbReference type="EC" id="4.2.1.9"/>
    </reaction>
    <physiologicalReaction direction="left-to-right" evidence="1">
        <dbReference type="Rhea" id="RHEA:27695"/>
    </physiologicalReaction>
</comment>
<comment type="cofactor">
    <cofactor evidence="1">
        <name>[2Fe-2S] cluster</name>
        <dbReference type="ChEBI" id="CHEBI:190135"/>
    </cofactor>
    <text evidence="1">Binds 1 [2Fe-2S] cluster per subunit. This cluster acts as a Lewis acid cofactor.</text>
</comment>
<comment type="cofactor">
    <cofactor evidence="1">
        <name>Mg(2+)</name>
        <dbReference type="ChEBI" id="CHEBI:18420"/>
    </cofactor>
</comment>
<comment type="pathway">
    <text evidence="1">Amino-acid biosynthesis; L-isoleucine biosynthesis; L-isoleucine from 2-oxobutanoate: step 3/4.</text>
</comment>
<comment type="pathway">
    <text evidence="1">Amino-acid biosynthesis; L-valine biosynthesis; L-valine from pyruvate: step 3/4.</text>
</comment>
<comment type="subunit">
    <text evidence="1">Homodimer.</text>
</comment>
<comment type="similarity">
    <text evidence="1">Belongs to the IlvD/Edd family.</text>
</comment>
<feature type="chain" id="PRO_1000073986" description="Dihydroxy-acid dehydratase">
    <location>
        <begin position="1"/>
        <end position="615"/>
    </location>
</feature>
<feature type="active site" description="Proton acceptor" evidence="1">
    <location>
        <position position="520"/>
    </location>
</feature>
<feature type="binding site" evidence="1">
    <location>
        <position position="81"/>
    </location>
    <ligand>
        <name>Mg(2+)</name>
        <dbReference type="ChEBI" id="CHEBI:18420"/>
    </ligand>
</feature>
<feature type="binding site" evidence="1">
    <location>
        <position position="122"/>
    </location>
    <ligand>
        <name>[2Fe-2S] cluster</name>
        <dbReference type="ChEBI" id="CHEBI:190135"/>
    </ligand>
</feature>
<feature type="binding site" evidence="1">
    <location>
        <position position="123"/>
    </location>
    <ligand>
        <name>Mg(2+)</name>
        <dbReference type="ChEBI" id="CHEBI:18420"/>
    </ligand>
</feature>
<feature type="binding site" description="via carbamate group" evidence="1">
    <location>
        <position position="124"/>
    </location>
    <ligand>
        <name>Mg(2+)</name>
        <dbReference type="ChEBI" id="CHEBI:18420"/>
    </ligand>
</feature>
<feature type="binding site" evidence="1">
    <location>
        <position position="197"/>
    </location>
    <ligand>
        <name>[2Fe-2S] cluster</name>
        <dbReference type="ChEBI" id="CHEBI:190135"/>
    </ligand>
</feature>
<feature type="binding site" evidence="1">
    <location>
        <position position="494"/>
    </location>
    <ligand>
        <name>Mg(2+)</name>
        <dbReference type="ChEBI" id="CHEBI:18420"/>
    </ligand>
</feature>
<feature type="modified residue" description="N6-carboxylysine" evidence="1">
    <location>
        <position position="124"/>
    </location>
</feature>
<dbReference type="EC" id="4.2.1.9" evidence="1"/>
<dbReference type="EMBL" id="CP000850">
    <property type="protein sequence ID" value="ABV97029.1"/>
    <property type="molecule type" value="Genomic_DNA"/>
</dbReference>
<dbReference type="SMR" id="A8M5F5"/>
<dbReference type="STRING" id="391037.Sare_1121"/>
<dbReference type="KEGG" id="saq:Sare_1121"/>
<dbReference type="eggNOG" id="COG0129">
    <property type="taxonomic scope" value="Bacteria"/>
</dbReference>
<dbReference type="HOGENOM" id="CLU_014271_4_3_11"/>
<dbReference type="OrthoDB" id="9807077at2"/>
<dbReference type="UniPathway" id="UPA00047">
    <property type="reaction ID" value="UER00057"/>
</dbReference>
<dbReference type="UniPathway" id="UPA00049">
    <property type="reaction ID" value="UER00061"/>
</dbReference>
<dbReference type="GO" id="GO:0005829">
    <property type="term" value="C:cytosol"/>
    <property type="evidence" value="ECO:0007669"/>
    <property type="project" value="TreeGrafter"/>
</dbReference>
<dbReference type="GO" id="GO:0051537">
    <property type="term" value="F:2 iron, 2 sulfur cluster binding"/>
    <property type="evidence" value="ECO:0007669"/>
    <property type="project" value="UniProtKB-UniRule"/>
</dbReference>
<dbReference type="GO" id="GO:0004160">
    <property type="term" value="F:dihydroxy-acid dehydratase activity"/>
    <property type="evidence" value="ECO:0007669"/>
    <property type="project" value="UniProtKB-UniRule"/>
</dbReference>
<dbReference type="GO" id="GO:0000287">
    <property type="term" value="F:magnesium ion binding"/>
    <property type="evidence" value="ECO:0007669"/>
    <property type="project" value="UniProtKB-UniRule"/>
</dbReference>
<dbReference type="GO" id="GO:0009097">
    <property type="term" value="P:isoleucine biosynthetic process"/>
    <property type="evidence" value="ECO:0007669"/>
    <property type="project" value="UniProtKB-UniRule"/>
</dbReference>
<dbReference type="GO" id="GO:0009099">
    <property type="term" value="P:L-valine biosynthetic process"/>
    <property type="evidence" value="ECO:0007669"/>
    <property type="project" value="UniProtKB-UniRule"/>
</dbReference>
<dbReference type="FunFam" id="3.50.30.80:FF:000001">
    <property type="entry name" value="Dihydroxy-acid dehydratase"/>
    <property type="match status" value="1"/>
</dbReference>
<dbReference type="Gene3D" id="3.50.30.80">
    <property type="entry name" value="IlvD/EDD C-terminal domain-like"/>
    <property type="match status" value="1"/>
</dbReference>
<dbReference type="HAMAP" id="MF_00012">
    <property type="entry name" value="IlvD"/>
    <property type="match status" value="1"/>
</dbReference>
<dbReference type="InterPro" id="IPR042096">
    <property type="entry name" value="Dihydro-acid_dehy_C"/>
</dbReference>
<dbReference type="InterPro" id="IPR004404">
    <property type="entry name" value="DihydroxyA_deHydtase"/>
</dbReference>
<dbReference type="InterPro" id="IPR020558">
    <property type="entry name" value="DiOHA_6PGluconate_deHydtase_CS"/>
</dbReference>
<dbReference type="InterPro" id="IPR056740">
    <property type="entry name" value="ILV_EDD_C"/>
</dbReference>
<dbReference type="InterPro" id="IPR000581">
    <property type="entry name" value="ILV_EDD_N"/>
</dbReference>
<dbReference type="InterPro" id="IPR037237">
    <property type="entry name" value="IlvD/EDD_N"/>
</dbReference>
<dbReference type="NCBIfam" id="TIGR00110">
    <property type="entry name" value="ilvD"/>
    <property type="match status" value="1"/>
</dbReference>
<dbReference type="NCBIfam" id="NF009103">
    <property type="entry name" value="PRK12448.1"/>
    <property type="match status" value="1"/>
</dbReference>
<dbReference type="PANTHER" id="PTHR43661">
    <property type="entry name" value="D-XYLONATE DEHYDRATASE"/>
    <property type="match status" value="1"/>
</dbReference>
<dbReference type="PANTHER" id="PTHR43661:SF3">
    <property type="entry name" value="D-XYLONATE DEHYDRATASE YAGF-RELATED"/>
    <property type="match status" value="1"/>
</dbReference>
<dbReference type="Pfam" id="PF24877">
    <property type="entry name" value="ILV_EDD_C"/>
    <property type="match status" value="1"/>
</dbReference>
<dbReference type="Pfam" id="PF00920">
    <property type="entry name" value="ILVD_EDD_N"/>
    <property type="match status" value="1"/>
</dbReference>
<dbReference type="SUPFAM" id="SSF143975">
    <property type="entry name" value="IlvD/EDD N-terminal domain-like"/>
    <property type="match status" value="1"/>
</dbReference>
<dbReference type="SUPFAM" id="SSF52016">
    <property type="entry name" value="LeuD/IlvD-like"/>
    <property type="match status" value="1"/>
</dbReference>
<dbReference type="PROSITE" id="PS00886">
    <property type="entry name" value="ILVD_EDD_1"/>
    <property type="match status" value="1"/>
</dbReference>
<dbReference type="PROSITE" id="PS00887">
    <property type="entry name" value="ILVD_EDD_2"/>
    <property type="match status" value="1"/>
</dbReference>
<protein>
    <recommendedName>
        <fullName evidence="1">Dihydroxy-acid dehydratase</fullName>
        <shortName evidence="1">DAD</shortName>
        <ecNumber evidence="1">4.2.1.9</ecNumber>
    </recommendedName>
</protein>
<gene>
    <name evidence="1" type="primary">ilvD</name>
    <name type="ordered locus">Sare_1121</name>
</gene>
<proteinExistence type="inferred from homology"/>
<evidence type="ECO:0000255" key="1">
    <source>
        <dbReference type="HAMAP-Rule" id="MF_00012"/>
    </source>
</evidence>
<sequence length="615" mass="64471">MPELRSRTSTHGRTMAGARALWRATGMTDDDFGKPIVAIANSFTQFVPGHVHLKDLGGLVADAVAEAGGVGREFNTIAVDDGIAMGHGGMLYSLPSRELIADAVEYMVNAHCADALVCISNCDKITPGMLLAALRLNIPTVFVSGGPMEAGKTVAIEGIVHSKIDLIDAMIAASNEAVTDDQLDQIERSACPTCGSCSGMFTANSMNCLTEAIGLALPGNGSTLATHAARRSLFVDAGRTVVEIAKRWYDGDDATVLPRAVANRAAFENAVALDVAMGGSTNTILHLLAAAREAELDFGVADIDTISRRVPCLAKVAPNSPLYHMEDVHRAGGIPAILGELDRAGLLNREVHAVHSPSLATWLADWDVRGDAATPEAVDLFHAAPGGVRTVEPFSTTNRWSTLDTDAAGGCVRDRAHAYTADGGLAILHGNLAPDGCVVKTAGVPEECLTFRGPARVYESQDDAVAAILAKEVTAGDVVVIRYEGPRGGPGMQEMLYPTSFLKGRGLGRACALLTDGRFSGGTSGLSIGHVSPEAAAGGLIALVEPGDEIVIDIPNRTIELAVPADVLDARRVAQEKRDRPYTPADRQRPVSAALRAYASMATSASDGAYRRVPE</sequence>
<reference key="1">
    <citation type="submission" date="2007-10" db="EMBL/GenBank/DDBJ databases">
        <title>Complete sequence of Salinispora arenicola CNS-205.</title>
        <authorList>
            <consortium name="US DOE Joint Genome Institute"/>
            <person name="Copeland A."/>
            <person name="Lucas S."/>
            <person name="Lapidus A."/>
            <person name="Barry K."/>
            <person name="Glavina del Rio T."/>
            <person name="Dalin E."/>
            <person name="Tice H."/>
            <person name="Pitluck S."/>
            <person name="Foster B."/>
            <person name="Schmutz J."/>
            <person name="Larimer F."/>
            <person name="Land M."/>
            <person name="Hauser L."/>
            <person name="Kyrpides N."/>
            <person name="Ivanova N."/>
            <person name="Jensen P.R."/>
            <person name="Moore B.S."/>
            <person name="Penn K."/>
            <person name="Jenkins C."/>
            <person name="Udwary D."/>
            <person name="Xiang L."/>
            <person name="Gontang E."/>
            <person name="Richardson P."/>
        </authorList>
    </citation>
    <scope>NUCLEOTIDE SEQUENCE [LARGE SCALE GENOMIC DNA]</scope>
    <source>
        <strain>CNS-205</strain>
    </source>
</reference>
<accession>A8M5F5</accession>
<keyword id="KW-0001">2Fe-2S</keyword>
<keyword id="KW-0028">Amino-acid biosynthesis</keyword>
<keyword id="KW-0100">Branched-chain amino acid biosynthesis</keyword>
<keyword id="KW-0408">Iron</keyword>
<keyword id="KW-0411">Iron-sulfur</keyword>
<keyword id="KW-0456">Lyase</keyword>
<keyword id="KW-0460">Magnesium</keyword>
<keyword id="KW-0479">Metal-binding</keyword>